<reference key="1">
    <citation type="journal article" date="2004" name="Proc. Natl. Acad. Sci. U.S.A.">
        <title>Complete genomes of two clinical Staphylococcus aureus strains: evidence for the rapid evolution of virulence and drug resistance.</title>
        <authorList>
            <person name="Holden M.T.G."/>
            <person name="Feil E.J."/>
            <person name="Lindsay J.A."/>
            <person name="Peacock S.J."/>
            <person name="Day N.P.J."/>
            <person name="Enright M.C."/>
            <person name="Foster T.J."/>
            <person name="Moore C.E."/>
            <person name="Hurst L."/>
            <person name="Atkin R."/>
            <person name="Barron A."/>
            <person name="Bason N."/>
            <person name="Bentley S.D."/>
            <person name="Chillingworth C."/>
            <person name="Chillingworth T."/>
            <person name="Churcher C."/>
            <person name="Clark L."/>
            <person name="Corton C."/>
            <person name="Cronin A."/>
            <person name="Doggett J."/>
            <person name="Dowd L."/>
            <person name="Feltwell T."/>
            <person name="Hance Z."/>
            <person name="Harris B."/>
            <person name="Hauser H."/>
            <person name="Holroyd S."/>
            <person name="Jagels K."/>
            <person name="James K.D."/>
            <person name="Lennard N."/>
            <person name="Line A."/>
            <person name="Mayes R."/>
            <person name="Moule S."/>
            <person name="Mungall K."/>
            <person name="Ormond D."/>
            <person name="Quail M.A."/>
            <person name="Rabbinowitsch E."/>
            <person name="Rutherford K.M."/>
            <person name="Sanders M."/>
            <person name="Sharp S."/>
            <person name="Simmonds M."/>
            <person name="Stevens K."/>
            <person name="Whitehead S."/>
            <person name="Barrell B.G."/>
            <person name="Spratt B.G."/>
            <person name="Parkhill J."/>
        </authorList>
    </citation>
    <scope>NUCLEOTIDE SEQUENCE [LARGE SCALE GENOMIC DNA]</scope>
    <source>
        <strain>MRSA252</strain>
    </source>
</reference>
<gene>
    <name evidence="1" type="primary">purA</name>
    <name type="ordered locus">SAR0017</name>
</gene>
<dbReference type="EC" id="6.3.4.4" evidence="1"/>
<dbReference type="EMBL" id="BX571856">
    <property type="protein sequence ID" value="CAG39045.1"/>
    <property type="molecule type" value="Genomic_DNA"/>
</dbReference>
<dbReference type="RefSeq" id="WP_000095328.1">
    <property type="nucleotide sequence ID" value="NC_002952.2"/>
</dbReference>
<dbReference type="SMR" id="Q6GKS8"/>
<dbReference type="KEGG" id="sar:SAR0017"/>
<dbReference type="HOGENOM" id="CLU_029848_0_0_9"/>
<dbReference type="UniPathway" id="UPA00075">
    <property type="reaction ID" value="UER00335"/>
</dbReference>
<dbReference type="Proteomes" id="UP000000596">
    <property type="component" value="Chromosome"/>
</dbReference>
<dbReference type="GO" id="GO:0005737">
    <property type="term" value="C:cytoplasm"/>
    <property type="evidence" value="ECO:0007669"/>
    <property type="project" value="UniProtKB-SubCell"/>
</dbReference>
<dbReference type="GO" id="GO:0004019">
    <property type="term" value="F:adenylosuccinate synthase activity"/>
    <property type="evidence" value="ECO:0007669"/>
    <property type="project" value="UniProtKB-UniRule"/>
</dbReference>
<dbReference type="GO" id="GO:0005525">
    <property type="term" value="F:GTP binding"/>
    <property type="evidence" value="ECO:0007669"/>
    <property type="project" value="UniProtKB-UniRule"/>
</dbReference>
<dbReference type="GO" id="GO:0000287">
    <property type="term" value="F:magnesium ion binding"/>
    <property type="evidence" value="ECO:0007669"/>
    <property type="project" value="UniProtKB-UniRule"/>
</dbReference>
<dbReference type="GO" id="GO:0044208">
    <property type="term" value="P:'de novo' AMP biosynthetic process"/>
    <property type="evidence" value="ECO:0007669"/>
    <property type="project" value="UniProtKB-UniRule"/>
</dbReference>
<dbReference type="GO" id="GO:0046040">
    <property type="term" value="P:IMP metabolic process"/>
    <property type="evidence" value="ECO:0007669"/>
    <property type="project" value="TreeGrafter"/>
</dbReference>
<dbReference type="CDD" id="cd03108">
    <property type="entry name" value="AdSS"/>
    <property type="match status" value="1"/>
</dbReference>
<dbReference type="FunFam" id="1.10.300.10:FF:000001">
    <property type="entry name" value="Adenylosuccinate synthetase"/>
    <property type="match status" value="1"/>
</dbReference>
<dbReference type="FunFam" id="3.90.170.10:FF:000001">
    <property type="entry name" value="Adenylosuccinate synthetase"/>
    <property type="match status" value="1"/>
</dbReference>
<dbReference type="Gene3D" id="3.40.440.10">
    <property type="entry name" value="Adenylosuccinate Synthetase, subunit A, domain 1"/>
    <property type="match status" value="1"/>
</dbReference>
<dbReference type="Gene3D" id="1.10.300.10">
    <property type="entry name" value="Adenylosuccinate Synthetase, subunit A, domain 2"/>
    <property type="match status" value="1"/>
</dbReference>
<dbReference type="Gene3D" id="3.90.170.10">
    <property type="entry name" value="Adenylosuccinate Synthetase, subunit A, domain 3"/>
    <property type="match status" value="1"/>
</dbReference>
<dbReference type="HAMAP" id="MF_00011">
    <property type="entry name" value="Adenylosucc_synth"/>
    <property type="match status" value="1"/>
</dbReference>
<dbReference type="InterPro" id="IPR018220">
    <property type="entry name" value="Adenylosuccin_syn_GTP-bd"/>
</dbReference>
<dbReference type="InterPro" id="IPR033128">
    <property type="entry name" value="Adenylosuccin_syn_Lys_AS"/>
</dbReference>
<dbReference type="InterPro" id="IPR042109">
    <property type="entry name" value="Adenylosuccinate_synth_dom1"/>
</dbReference>
<dbReference type="InterPro" id="IPR042110">
    <property type="entry name" value="Adenylosuccinate_synth_dom2"/>
</dbReference>
<dbReference type="InterPro" id="IPR042111">
    <property type="entry name" value="Adenylosuccinate_synth_dom3"/>
</dbReference>
<dbReference type="InterPro" id="IPR001114">
    <property type="entry name" value="Adenylosuccinate_synthetase"/>
</dbReference>
<dbReference type="InterPro" id="IPR027417">
    <property type="entry name" value="P-loop_NTPase"/>
</dbReference>
<dbReference type="NCBIfam" id="NF002223">
    <property type="entry name" value="PRK01117.1"/>
    <property type="match status" value="1"/>
</dbReference>
<dbReference type="NCBIfam" id="TIGR00184">
    <property type="entry name" value="purA"/>
    <property type="match status" value="1"/>
</dbReference>
<dbReference type="PANTHER" id="PTHR11846">
    <property type="entry name" value="ADENYLOSUCCINATE SYNTHETASE"/>
    <property type="match status" value="1"/>
</dbReference>
<dbReference type="PANTHER" id="PTHR11846:SF0">
    <property type="entry name" value="ADENYLOSUCCINATE SYNTHETASE"/>
    <property type="match status" value="1"/>
</dbReference>
<dbReference type="Pfam" id="PF00709">
    <property type="entry name" value="Adenylsucc_synt"/>
    <property type="match status" value="1"/>
</dbReference>
<dbReference type="SMART" id="SM00788">
    <property type="entry name" value="Adenylsucc_synt"/>
    <property type="match status" value="1"/>
</dbReference>
<dbReference type="SUPFAM" id="SSF52540">
    <property type="entry name" value="P-loop containing nucleoside triphosphate hydrolases"/>
    <property type="match status" value="1"/>
</dbReference>
<dbReference type="PROSITE" id="PS01266">
    <property type="entry name" value="ADENYLOSUCCIN_SYN_1"/>
    <property type="match status" value="1"/>
</dbReference>
<dbReference type="PROSITE" id="PS00513">
    <property type="entry name" value="ADENYLOSUCCIN_SYN_2"/>
    <property type="match status" value="1"/>
</dbReference>
<accession>Q6GKS8</accession>
<organism>
    <name type="scientific">Staphylococcus aureus (strain MRSA252)</name>
    <dbReference type="NCBI Taxonomy" id="282458"/>
    <lineage>
        <taxon>Bacteria</taxon>
        <taxon>Bacillati</taxon>
        <taxon>Bacillota</taxon>
        <taxon>Bacilli</taxon>
        <taxon>Bacillales</taxon>
        <taxon>Staphylococcaceae</taxon>
        <taxon>Staphylococcus</taxon>
    </lineage>
</organism>
<comment type="function">
    <text evidence="1">Plays an important role in the de novo pathway of purine nucleotide biosynthesis. Catalyzes the first committed step in the biosynthesis of AMP from IMP.</text>
</comment>
<comment type="catalytic activity">
    <reaction evidence="1">
        <text>IMP + L-aspartate + GTP = N(6)-(1,2-dicarboxyethyl)-AMP + GDP + phosphate + 2 H(+)</text>
        <dbReference type="Rhea" id="RHEA:15753"/>
        <dbReference type="ChEBI" id="CHEBI:15378"/>
        <dbReference type="ChEBI" id="CHEBI:29991"/>
        <dbReference type="ChEBI" id="CHEBI:37565"/>
        <dbReference type="ChEBI" id="CHEBI:43474"/>
        <dbReference type="ChEBI" id="CHEBI:57567"/>
        <dbReference type="ChEBI" id="CHEBI:58053"/>
        <dbReference type="ChEBI" id="CHEBI:58189"/>
        <dbReference type="EC" id="6.3.4.4"/>
    </reaction>
</comment>
<comment type="cofactor">
    <cofactor evidence="1">
        <name>Mg(2+)</name>
        <dbReference type="ChEBI" id="CHEBI:18420"/>
    </cofactor>
    <text evidence="1">Binds 1 Mg(2+) ion per subunit.</text>
</comment>
<comment type="pathway">
    <text evidence="1">Purine metabolism; AMP biosynthesis via de novo pathway; AMP from IMP: step 1/2.</text>
</comment>
<comment type="subunit">
    <text evidence="1">Homodimer.</text>
</comment>
<comment type="subcellular location">
    <subcellularLocation>
        <location evidence="1">Cytoplasm</location>
    </subcellularLocation>
</comment>
<comment type="similarity">
    <text evidence="1">Belongs to the adenylosuccinate synthetase family.</text>
</comment>
<feature type="chain" id="PRO_0000095229" description="Adenylosuccinate synthetase">
    <location>
        <begin position="1"/>
        <end position="427"/>
    </location>
</feature>
<feature type="active site" description="Proton acceptor" evidence="1">
    <location>
        <position position="13"/>
    </location>
</feature>
<feature type="active site" description="Proton donor" evidence="1">
    <location>
        <position position="41"/>
    </location>
</feature>
<feature type="binding site" evidence="1">
    <location>
        <begin position="12"/>
        <end position="18"/>
    </location>
    <ligand>
        <name>GTP</name>
        <dbReference type="ChEBI" id="CHEBI:37565"/>
    </ligand>
</feature>
<feature type="binding site" description="in other chain" evidence="1">
    <location>
        <begin position="13"/>
        <end position="16"/>
    </location>
    <ligand>
        <name>IMP</name>
        <dbReference type="ChEBI" id="CHEBI:58053"/>
        <note>ligand shared between dimeric partners</note>
    </ligand>
</feature>
<feature type="binding site" evidence="1">
    <location>
        <position position="13"/>
    </location>
    <ligand>
        <name>Mg(2+)</name>
        <dbReference type="ChEBI" id="CHEBI:18420"/>
    </ligand>
</feature>
<feature type="binding site" description="in other chain" evidence="1">
    <location>
        <begin position="38"/>
        <end position="41"/>
    </location>
    <ligand>
        <name>IMP</name>
        <dbReference type="ChEBI" id="CHEBI:58053"/>
        <note>ligand shared between dimeric partners</note>
    </ligand>
</feature>
<feature type="binding site" evidence="1">
    <location>
        <begin position="40"/>
        <end position="42"/>
    </location>
    <ligand>
        <name>GTP</name>
        <dbReference type="ChEBI" id="CHEBI:37565"/>
    </ligand>
</feature>
<feature type="binding site" evidence="1">
    <location>
        <position position="40"/>
    </location>
    <ligand>
        <name>Mg(2+)</name>
        <dbReference type="ChEBI" id="CHEBI:18420"/>
    </ligand>
</feature>
<feature type="binding site" description="in other chain" evidence="1">
    <location>
        <position position="128"/>
    </location>
    <ligand>
        <name>IMP</name>
        <dbReference type="ChEBI" id="CHEBI:58053"/>
        <note>ligand shared between dimeric partners</note>
    </ligand>
</feature>
<feature type="binding site" evidence="1">
    <location>
        <position position="142"/>
    </location>
    <ligand>
        <name>IMP</name>
        <dbReference type="ChEBI" id="CHEBI:58053"/>
        <note>ligand shared between dimeric partners</note>
    </ligand>
</feature>
<feature type="binding site" description="in other chain" evidence="1">
    <location>
        <position position="223"/>
    </location>
    <ligand>
        <name>IMP</name>
        <dbReference type="ChEBI" id="CHEBI:58053"/>
        <note>ligand shared between dimeric partners</note>
    </ligand>
</feature>
<feature type="binding site" description="in other chain" evidence="1">
    <location>
        <position position="238"/>
    </location>
    <ligand>
        <name>IMP</name>
        <dbReference type="ChEBI" id="CHEBI:58053"/>
        <note>ligand shared between dimeric partners</note>
    </ligand>
</feature>
<feature type="binding site" evidence="1">
    <location>
        <begin position="298"/>
        <end position="304"/>
    </location>
    <ligand>
        <name>substrate</name>
    </ligand>
</feature>
<feature type="binding site" description="in other chain" evidence="1">
    <location>
        <position position="302"/>
    </location>
    <ligand>
        <name>IMP</name>
        <dbReference type="ChEBI" id="CHEBI:58053"/>
        <note>ligand shared between dimeric partners</note>
    </ligand>
</feature>
<feature type="binding site" evidence="1">
    <location>
        <position position="304"/>
    </location>
    <ligand>
        <name>GTP</name>
        <dbReference type="ChEBI" id="CHEBI:37565"/>
    </ligand>
</feature>
<feature type="binding site" evidence="1">
    <location>
        <begin position="330"/>
        <end position="332"/>
    </location>
    <ligand>
        <name>GTP</name>
        <dbReference type="ChEBI" id="CHEBI:37565"/>
    </ligand>
</feature>
<feature type="binding site" evidence="1">
    <location>
        <begin position="412"/>
        <end position="414"/>
    </location>
    <ligand>
        <name>GTP</name>
        <dbReference type="ChEBI" id="CHEBI:37565"/>
    </ligand>
</feature>
<proteinExistence type="inferred from homology"/>
<name>PURA_STAAR</name>
<evidence type="ECO:0000255" key="1">
    <source>
        <dbReference type="HAMAP-Rule" id="MF_00011"/>
    </source>
</evidence>
<protein>
    <recommendedName>
        <fullName evidence="1">Adenylosuccinate synthetase</fullName>
        <shortName evidence="1">AMPSase</shortName>
        <shortName evidence="1">AdSS</shortName>
        <ecNumber evidence="1">6.3.4.4</ecNumber>
    </recommendedName>
    <alternativeName>
        <fullName evidence="1">IMP--aspartate ligase</fullName>
    </alternativeName>
</protein>
<keyword id="KW-0963">Cytoplasm</keyword>
<keyword id="KW-0342">GTP-binding</keyword>
<keyword id="KW-0436">Ligase</keyword>
<keyword id="KW-0460">Magnesium</keyword>
<keyword id="KW-0479">Metal-binding</keyword>
<keyword id="KW-0547">Nucleotide-binding</keyword>
<keyword id="KW-0658">Purine biosynthesis</keyword>
<sequence length="427" mass="47552">MSSIVVVGTQWGDEGKGKITDFLAEQSDVIARFSGGNNAGHTIQFGGETYKLHLVPSGIFYKDKLAVIGNGVVVDPVALLKELDGLNERGIPTSNLRISNRAQVILPYHLAQDEYEERLRGDNKIGTTKKGIGPAYVDKVQRIGIRMADLLEKETFERLLKSNIEYKQAYFKGMFNETCPSFDDIFEEYYAAGQRLKEFVTDTSKILDDAFVADEKVLFEGAQGVMLDIDHGTYPFVTSSNPIAGNVTVGTGVGPTFVSKVIGVCKAYTSRVGDGPFPTELFDEDGHHIREVGREYGTTTGRPRRVGWFDSVVLRHSRRVSGITDLSINSIDVLTGLDTVKICTAYELDGKEITEYPANLDQLKRCKPIFEELPGWTEDVTSVRTLEELPENARKYLERISELCNVQISIFSVGPDREQTNLLKELW</sequence>